<sequence length="150" mass="17498">MIRILGEGKGSNLLEDVKEKLEEIVKKEIGDVHVNVILVSEDEIKELNQQFRSHDQPTDVLTFLLMEEDVYGEIYVCPMIVEENAKEFSNTFEKELLEVVIHGILHLAGYDHEFEDRKSKEMFEKQKKYVEEVWGEWRSDPSEDSGPGKR</sequence>
<evidence type="ECO:0000255" key="1">
    <source>
        <dbReference type="HAMAP-Rule" id="MF_00009"/>
    </source>
</evidence>
<gene>
    <name evidence="1" type="primary">ybeY</name>
    <name type="ordered locus">Tpet_1283</name>
</gene>
<protein>
    <recommendedName>
        <fullName evidence="1">Endoribonuclease YbeY</fullName>
        <ecNumber evidence="1">3.1.-.-</ecNumber>
    </recommendedName>
</protein>
<organism>
    <name type="scientific">Thermotoga petrophila (strain ATCC BAA-488 / DSM 13995 / JCM 10881 / RKU-1)</name>
    <dbReference type="NCBI Taxonomy" id="390874"/>
    <lineage>
        <taxon>Bacteria</taxon>
        <taxon>Thermotogati</taxon>
        <taxon>Thermotogota</taxon>
        <taxon>Thermotogae</taxon>
        <taxon>Thermotogales</taxon>
        <taxon>Thermotogaceae</taxon>
        <taxon>Thermotoga</taxon>
    </lineage>
</organism>
<dbReference type="EC" id="3.1.-.-" evidence="1"/>
<dbReference type="EMBL" id="CP000702">
    <property type="protein sequence ID" value="ABQ47297.1"/>
    <property type="molecule type" value="Genomic_DNA"/>
</dbReference>
<dbReference type="RefSeq" id="WP_011943778.1">
    <property type="nucleotide sequence ID" value="NC_009486.1"/>
</dbReference>
<dbReference type="SMR" id="A5IM74"/>
<dbReference type="STRING" id="390874.Tpet_1283"/>
<dbReference type="KEGG" id="tpt:Tpet_1283"/>
<dbReference type="eggNOG" id="COG0319">
    <property type="taxonomic scope" value="Bacteria"/>
</dbReference>
<dbReference type="HOGENOM" id="CLU_106710_3_3_0"/>
<dbReference type="Proteomes" id="UP000006558">
    <property type="component" value="Chromosome"/>
</dbReference>
<dbReference type="GO" id="GO:0005737">
    <property type="term" value="C:cytoplasm"/>
    <property type="evidence" value="ECO:0007669"/>
    <property type="project" value="UniProtKB-SubCell"/>
</dbReference>
<dbReference type="GO" id="GO:0004222">
    <property type="term" value="F:metalloendopeptidase activity"/>
    <property type="evidence" value="ECO:0007669"/>
    <property type="project" value="InterPro"/>
</dbReference>
<dbReference type="GO" id="GO:0004521">
    <property type="term" value="F:RNA endonuclease activity"/>
    <property type="evidence" value="ECO:0007669"/>
    <property type="project" value="UniProtKB-UniRule"/>
</dbReference>
<dbReference type="GO" id="GO:0008270">
    <property type="term" value="F:zinc ion binding"/>
    <property type="evidence" value="ECO:0007669"/>
    <property type="project" value="UniProtKB-UniRule"/>
</dbReference>
<dbReference type="GO" id="GO:0006364">
    <property type="term" value="P:rRNA processing"/>
    <property type="evidence" value="ECO:0007669"/>
    <property type="project" value="UniProtKB-UniRule"/>
</dbReference>
<dbReference type="Gene3D" id="3.40.390.30">
    <property type="entry name" value="Metalloproteases ('zincins'), catalytic domain"/>
    <property type="match status" value="1"/>
</dbReference>
<dbReference type="HAMAP" id="MF_00009">
    <property type="entry name" value="Endoribonucl_YbeY"/>
    <property type="match status" value="1"/>
</dbReference>
<dbReference type="InterPro" id="IPR023091">
    <property type="entry name" value="MetalPrtase_cat_dom_sf_prd"/>
</dbReference>
<dbReference type="InterPro" id="IPR002036">
    <property type="entry name" value="YbeY"/>
</dbReference>
<dbReference type="InterPro" id="IPR020549">
    <property type="entry name" value="YbeY_CS"/>
</dbReference>
<dbReference type="NCBIfam" id="TIGR00043">
    <property type="entry name" value="rRNA maturation RNase YbeY"/>
    <property type="match status" value="1"/>
</dbReference>
<dbReference type="PANTHER" id="PTHR46986">
    <property type="entry name" value="ENDORIBONUCLEASE YBEY, CHLOROPLASTIC"/>
    <property type="match status" value="1"/>
</dbReference>
<dbReference type="PANTHER" id="PTHR46986:SF1">
    <property type="entry name" value="ENDORIBONUCLEASE YBEY, CHLOROPLASTIC"/>
    <property type="match status" value="1"/>
</dbReference>
<dbReference type="Pfam" id="PF02130">
    <property type="entry name" value="YbeY"/>
    <property type="match status" value="1"/>
</dbReference>
<dbReference type="SUPFAM" id="SSF55486">
    <property type="entry name" value="Metalloproteases ('zincins'), catalytic domain"/>
    <property type="match status" value="1"/>
</dbReference>
<dbReference type="PROSITE" id="PS01306">
    <property type="entry name" value="UPF0054"/>
    <property type="match status" value="1"/>
</dbReference>
<proteinExistence type="inferred from homology"/>
<name>YBEY_THEP1</name>
<accession>A5IM74</accession>
<comment type="function">
    <text evidence="1">Single strand-specific metallo-endoribonuclease involved in late-stage 70S ribosome quality control and in maturation of the 3' terminus of the 16S rRNA.</text>
</comment>
<comment type="cofactor">
    <cofactor evidence="1">
        <name>Zn(2+)</name>
        <dbReference type="ChEBI" id="CHEBI:29105"/>
    </cofactor>
    <text evidence="1">Binds 1 zinc ion.</text>
</comment>
<comment type="subcellular location">
    <subcellularLocation>
        <location evidence="1">Cytoplasm</location>
    </subcellularLocation>
</comment>
<comment type="similarity">
    <text evidence="1">Belongs to the endoribonuclease YbeY family.</text>
</comment>
<keyword id="KW-0963">Cytoplasm</keyword>
<keyword id="KW-0255">Endonuclease</keyword>
<keyword id="KW-0378">Hydrolase</keyword>
<keyword id="KW-0479">Metal-binding</keyword>
<keyword id="KW-0540">Nuclease</keyword>
<keyword id="KW-0690">Ribosome biogenesis</keyword>
<keyword id="KW-0698">rRNA processing</keyword>
<keyword id="KW-0862">Zinc</keyword>
<feature type="chain" id="PRO_1000000751" description="Endoribonuclease YbeY">
    <location>
        <begin position="1"/>
        <end position="150"/>
    </location>
</feature>
<feature type="binding site" evidence="1">
    <location>
        <position position="102"/>
    </location>
    <ligand>
        <name>Zn(2+)</name>
        <dbReference type="ChEBI" id="CHEBI:29105"/>
        <note>catalytic</note>
    </ligand>
</feature>
<feature type="binding site" evidence="1">
    <location>
        <position position="106"/>
    </location>
    <ligand>
        <name>Zn(2+)</name>
        <dbReference type="ChEBI" id="CHEBI:29105"/>
        <note>catalytic</note>
    </ligand>
</feature>
<feature type="binding site" evidence="1">
    <location>
        <position position="112"/>
    </location>
    <ligand>
        <name>Zn(2+)</name>
        <dbReference type="ChEBI" id="CHEBI:29105"/>
        <note>catalytic</note>
    </ligand>
</feature>
<reference key="1">
    <citation type="submission" date="2007-05" db="EMBL/GenBank/DDBJ databases">
        <title>Complete sequence of Thermotoga petrophila RKU-1.</title>
        <authorList>
            <consortium name="US DOE Joint Genome Institute"/>
            <person name="Copeland A."/>
            <person name="Lucas S."/>
            <person name="Lapidus A."/>
            <person name="Barry K."/>
            <person name="Glavina del Rio T."/>
            <person name="Dalin E."/>
            <person name="Tice H."/>
            <person name="Pitluck S."/>
            <person name="Sims D."/>
            <person name="Brettin T."/>
            <person name="Bruce D."/>
            <person name="Detter J.C."/>
            <person name="Han C."/>
            <person name="Tapia R."/>
            <person name="Schmutz J."/>
            <person name="Larimer F."/>
            <person name="Land M."/>
            <person name="Hauser L."/>
            <person name="Kyrpides N."/>
            <person name="Mikhailova N."/>
            <person name="Nelson K."/>
            <person name="Gogarten J.P."/>
            <person name="Noll K."/>
            <person name="Richardson P."/>
        </authorList>
    </citation>
    <scope>NUCLEOTIDE SEQUENCE [LARGE SCALE GENOMIC DNA]</scope>
    <source>
        <strain>ATCC BAA-488 / DSM 13995 / JCM 10881 / RKU-1</strain>
    </source>
</reference>